<keyword id="KW-0004">4Fe-4S</keyword>
<keyword id="KW-0067">ATP-binding</keyword>
<keyword id="KW-0149">Chlorophyll biosynthesis</keyword>
<keyword id="KW-0150">Chloroplast</keyword>
<keyword id="KW-0408">Iron</keyword>
<keyword id="KW-0411">Iron-sulfur</keyword>
<keyword id="KW-0479">Metal-binding</keyword>
<keyword id="KW-0547">Nucleotide-binding</keyword>
<keyword id="KW-0560">Oxidoreductase</keyword>
<keyword id="KW-0602">Photosynthesis</keyword>
<keyword id="KW-0934">Plastid</keyword>
<keyword id="KW-1185">Reference proteome</keyword>
<feature type="chain" id="PRO_0000208610" description="Light-independent protochlorophyllide reductase subunit N">
    <location>
        <begin position="1"/>
        <end position="545"/>
    </location>
</feature>
<feature type="binding site" evidence="1">
    <location>
        <position position="102"/>
    </location>
    <ligand>
        <name>[4Fe-4S] cluster</name>
        <dbReference type="ChEBI" id="CHEBI:49883"/>
        <note>ligand shared with heterodimeric partner</note>
    </ligand>
</feature>
<feature type="binding site" evidence="1">
    <location>
        <position position="127"/>
    </location>
    <ligand>
        <name>[4Fe-4S] cluster</name>
        <dbReference type="ChEBI" id="CHEBI:49883"/>
        <note>ligand shared with heterodimeric partner</note>
    </ligand>
</feature>
<feature type="binding site" evidence="1">
    <location>
        <position position="187"/>
    </location>
    <ligand>
        <name>[4Fe-4S] cluster</name>
        <dbReference type="ChEBI" id="CHEBI:49883"/>
        <note>ligand shared with heterodimeric partner</note>
    </ligand>
</feature>
<feature type="sequence variant" description="In strain: CC-503.">
    <original>R</original>
    <variation>Q</variation>
    <location>
        <position position="476"/>
    </location>
</feature>
<feature type="sequence variant" description="In strain: CC-503.">
    <original>Q</original>
    <variation>R</variation>
    <location>
        <position position="529"/>
    </location>
</feature>
<geneLocation type="chloroplast"/>
<gene>
    <name evidence="1" type="primary">chlN</name>
</gene>
<comment type="function">
    <text evidence="1">Component of the dark-operative protochlorophyllide reductase (DPOR) that uses Mg-ATP and reduced ferredoxin to reduce ring D of protochlorophyllide (Pchlide) to form chlorophyllide a (Chlide). This reaction is light-independent. The NB-protein (ChlN-ChlB) is the catalytic component of the complex.</text>
</comment>
<comment type="catalytic activity">
    <reaction evidence="1">
        <text>chlorophyllide a + oxidized 2[4Fe-4S]-[ferredoxin] + 2 ADP + 2 phosphate = protochlorophyllide a + reduced 2[4Fe-4S]-[ferredoxin] + 2 ATP + 2 H2O</text>
        <dbReference type="Rhea" id="RHEA:28202"/>
        <dbReference type="Rhea" id="RHEA-COMP:10002"/>
        <dbReference type="Rhea" id="RHEA-COMP:10004"/>
        <dbReference type="ChEBI" id="CHEBI:15377"/>
        <dbReference type="ChEBI" id="CHEBI:30616"/>
        <dbReference type="ChEBI" id="CHEBI:33722"/>
        <dbReference type="ChEBI" id="CHEBI:33723"/>
        <dbReference type="ChEBI" id="CHEBI:43474"/>
        <dbReference type="ChEBI" id="CHEBI:83348"/>
        <dbReference type="ChEBI" id="CHEBI:83350"/>
        <dbReference type="ChEBI" id="CHEBI:456216"/>
        <dbReference type="EC" id="1.3.7.7"/>
    </reaction>
</comment>
<comment type="cofactor">
    <cofactor evidence="1">
        <name>[4Fe-4S] cluster</name>
        <dbReference type="ChEBI" id="CHEBI:49883"/>
    </cofactor>
    <text evidence="1">Binds 1 [4Fe-4S] cluster per heterodimer. The cluster is bound at the heterodimer interface by residues from both subunits.</text>
</comment>
<comment type="pathway">
    <text evidence="1">Porphyrin-containing compound metabolism; chlorophyll biosynthesis (light-independent).</text>
</comment>
<comment type="subunit">
    <text evidence="1">Protochlorophyllide reductase is composed of three subunits; ChlL, ChlN and ChlB. Forms a heterotetramer of two ChlB and two ChlN subunits.</text>
</comment>
<comment type="subcellular location">
    <subcellularLocation>
        <location>Plastid</location>
        <location>Chloroplast</location>
    </subcellularLocation>
</comment>
<comment type="similarity">
    <text evidence="1">Belongs to the BchN/ChlN family.</text>
</comment>
<comment type="sequence caution" evidence="2">
    <conflict type="erroneous initiation">
        <sequence resource="EMBL-CDS" id="ACJ50143"/>
    </conflict>
</comment>
<reference key="1">
    <citation type="journal article" date="1992" name="EMBO J.">
        <title>A chloroplast gene is required for the light-independent accumulation of chlorophyll in Chlamydomonas reinhardtii.</title>
        <authorList>
            <person name="Choquet Y."/>
            <person name="Rahire M."/>
            <person name="Girard-Bascou J."/>
            <person name="Erickson J."/>
            <person name="Rochaix J.-D."/>
        </authorList>
    </citation>
    <scope>NUCLEOTIDE SEQUENCE [GENOMIC DNA]</scope>
</reference>
<reference key="2">
    <citation type="journal article" date="2009" name="BMC Evol. Biol.">
        <title>Nucleotide diversity of the Chlamydomonas reinhardtii plastid genome: addressing the mutational-hazard hypothesis.</title>
        <authorList>
            <person name="Smith D.R."/>
            <person name="Lee R.W."/>
        </authorList>
    </citation>
    <scope>NUCLEOTIDE SEQUENCE [LARGE SCALE GENOMIC DNA]</scope>
    <source>
        <strain>CC-503</strain>
    </source>
</reference>
<reference key="3">
    <citation type="journal article" date="2002" name="Plant Cell">
        <title>The Chlamydomonas reinhardtii plastid chromosome: islands of genes in a sea of repeats.</title>
        <authorList>
            <person name="Maul J.E."/>
            <person name="Lilly J.W."/>
            <person name="Cui L."/>
            <person name="dePamphilis C.W."/>
            <person name="Miller W."/>
            <person name="Harris E.H."/>
            <person name="Stern D.B."/>
        </authorList>
    </citation>
    <scope>IDENTIFICATION</scope>
    <scope>COMPLETE PLASTID GENOME</scope>
</reference>
<proteinExistence type="inferred from homology"/>
<protein>
    <recommendedName>
        <fullName evidence="1">Light-independent protochlorophyllide reductase subunit N</fullName>
        <shortName evidence="1">DPOR subunit N</shortName>
        <shortName evidence="1">LI-POR subunit N</shortName>
        <ecNumber evidence="1">1.3.7.7</ecNumber>
    </recommendedName>
</protein>
<evidence type="ECO:0000255" key="1">
    <source>
        <dbReference type="HAMAP-Rule" id="MF_00352"/>
    </source>
</evidence>
<evidence type="ECO:0000305" key="2"/>
<accession>P29683</accession>
<accession>B7U1J6</accession>
<organism>
    <name type="scientific">Chlamydomonas reinhardtii</name>
    <name type="common">Chlamydomonas smithii</name>
    <dbReference type="NCBI Taxonomy" id="3055"/>
    <lineage>
        <taxon>Eukaryota</taxon>
        <taxon>Viridiplantae</taxon>
        <taxon>Chlorophyta</taxon>
        <taxon>core chlorophytes</taxon>
        <taxon>Chlorophyceae</taxon>
        <taxon>CS clade</taxon>
        <taxon>Chlamydomonadales</taxon>
        <taxon>Chlamydomonadaceae</taxon>
        <taxon>Chlamydomonas</taxon>
    </lineage>
</organism>
<name>CHLN_CHLRE</name>
<sequence length="545" mass="60868">MKPLKLKRLIMENNKSHATNLSLGGPFQGNCMPINQYFSKNQPNRGSSSSEKRSSLLPLWESKNAADGFSIVSHNVLLDGATTILNLNSFFECETGNYHTFCPISCVAWLYQKIEDSFFLVIGTKTCGYFLQNALGVMIFAEPRYAMAELEESDISAQLNDYKELKRLCLQIKQDRNPSVIVWIGTCTTEIIKMDLEGMAPRLETEIGIPIVVARANGLDYAFTQGEDTVLSAMALASLKKDVPFLVGNTGLTNNQLLLEKSTSSVNGTDGKELLKKSLVLFGSVPSTVTTQLTLELKKEGINVSGWLPSANYKDLPTFNKDTLVCGINPFLSRTATTLMRRSKCTLICAPFPIGPDGTRVWIEKICGAFGINPSLNPITGNTNLYDREQKIFNGLEDYLKLLRGKSVFFMGDNLLEISLARFLTRCGMIVYEIGIPYLDKRFQAAELALLEQTCKEMNVPMPRIVEKPDNYYQIRRIRELKPDLTITGMAHANPLEARGITTKWSVEFTFAQIHGFTNTREILELVTQPLRRNLMSNQSVNAIS</sequence>
<dbReference type="EC" id="1.3.7.7" evidence="1"/>
<dbReference type="EMBL" id="AY160685">
    <property type="protein sequence ID" value="AAN41268.1"/>
    <property type="molecule type" value="Genomic_DNA"/>
</dbReference>
<dbReference type="EMBL" id="FJ423446">
    <property type="protein sequence ID" value="ACJ50143.1"/>
    <property type="status" value="ALT_INIT"/>
    <property type="molecule type" value="Genomic_DNA"/>
</dbReference>
<dbReference type="EMBL" id="BK000554">
    <property type="protein sequence ID" value="DAA00956.1"/>
    <property type="molecule type" value="Genomic_DNA"/>
</dbReference>
<dbReference type="PIR" id="S20968">
    <property type="entry name" value="S20968"/>
</dbReference>
<dbReference type="RefSeq" id="NP_958412.2">
    <property type="nucleotide sequence ID" value="NC_005353.1"/>
</dbReference>
<dbReference type="SMR" id="P29683"/>
<dbReference type="STRING" id="3055.P29683"/>
<dbReference type="PaxDb" id="3055-DAA00956"/>
<dbReference type="GeneID" id="2716986"/>
<dbReference type="KEGG" id="cre:ChreCp056"/>
<dbReference type="eggNOG" id="ENOG502QQ7U">
    <property type="taxonomic scope" value="Eukaryota"/>
</dbReference>
<dbReference type="HOGENOM" id="CLU_037170_0_0_1"/>
<dbReference type="InParanoid" id="P29683"/>
<dbReference type="BioCyc" id="MetaCyc:MONOMER-17821"/>
<dbReference type="UniPathway" id="UPA00670"/>
<dbReference type="Proteomes" id="UP000006906">
    <property type="component" value="Chloroplast"/>
</dbReference>
<dbReference type="GO" id="GO:0009507">
    <property type="term" value="C:chloroplast"/>
    <property type="evidence" value="ECO:0007669"/>
    <property type="project" value="UniProtKB-SubCell"/>
</dbReference>
<dbReference type="GO" id="GO:0051539">
    <property type="term" value="F:4 iron, 4 sulfur cluster binding"/>
    <property type="evidence" value="ECO:0007669"/>
    <property type="project" value="UniProtKB-UniRule"/>
</dbReference>
<dbReference type="GO" id="GO:0005524">
    <property type="term" value="F:ATP binding"/>
    <property type="evidence" value="ECO:0007669"/>
    <property type="project" value="UniProtKB-UniRule"/>
</dbReference>
<dbReference type="GO" id="GO:0046872">
    <property type="term" value="F:metal ion binding"/>
    <property type="evidence" value="ECO:0007669"/>
    <property type="project" value="UniProtKB-KW"/>
</dbReference>
<dbReference type="GO" id="GO:0016730">
    <property type="term" value="F:oxidoreductase activity, acting on iron-sulfur proteins as donors"/>
    <property type="evidence" value="ECO:0007669"/>
    <property type="project" value="InterPro"/>
</dbReference>
<dbReference type="GO" id="GO:0016636">
    <property type="term" value="F:oxidoreductase activity, acting on the CH-CH group of donors, iron-sulfur protein as acceptor"/>
    <property type="evidence" value="ECO:0007669"/>
    <property type="project" value="UniProtKB-UniRule"/>
</dbReference>
<dbReference type="GO" id="GO:0036068">
    <property type="term" value="P:light-independent chlorophyll biosynthetic process"/>
    <property type="evidence" value="ECO:0007669"/>
    <property type="project" value="UniProtKB-UniRule"/>
</dbReference>
<dbReference type="GO" id="GO:0019685">
    <property type="term" value="P:photosynthesis, dark reaction"/>
    <property type="evidence" value="ECO:0007669"/>
    <property type="project" value="InterPro"/>
</dbReference>
<dbReference type="CDD" id="cd01979">
    <property type="entry name" value="Pchlide_reductase_N"/>
    <property type="match status" value="1"/>
</dbReference>
<dbReference type="Gene3D" id="3.40.50.1980">
    <property type="entry name" value="Nitrogenase molybdenum iron protein domain"/>
    <property type="match status" value="3"/>
</dbReference>
<dbReference type="HAMAP" id="MF_00352">
    <property type="entry name" value="ChlN_BchN"/>
    <property type="match status" value="1"/>
</dbReference>
<dbReference type="InterPro" id="IPR050293">
    <property type="entry name" value="LIPOR_BchN/ChlN"/>
</dbReference>
<dbReference type="InterPro" id="IPR000510">
    <property type="entry name" value="Nase/OxRdtase_comp1"/>
</dbReference>
<dbReference type="InterPro" id="IPR005970">
    <property type="entry name" value="Protochl_reductN"/>
</dbReference>
<dbReference type="NCBIfam" id="TIGR01279">
    <property type="entry name" value="DPOR_bchN"/>
    <property type="match status" value="1"/>
</dbReference>
<dbReference type="NCBIfam" id="NF002768">
    <property type="entry name" value="PRK02842.1"/>
    <property type="match status" value="1"/>
</dbReference>
<dbReference type="PANTHER" id="PTHR39429">
    <property type="entry name" value="LIGHT-INDEPENDENT PROTOCHLOROPHYLLIDE REDUCTASE SUBUNIT N"/>
    <property type="match status" value="1"/>
</dbReference>
<dbReference type="PANTHER" id="PTHR39429:SF3">
    <property type="entry name" value="LIGHT-INDEPENDENT PROTOCHLOROPHYLLIDE REDUCTASE SUBUNIT N"/>
    <property type="match status" value="1"/>
</dbReference>
<dbReference type="Pfam" id="PF00148">
    <property type="entry name" value="Oxidored_nitro"/>
    <property type="match status" value="1"/>
</dbReference>
<dbReference type="SUPFAM" id="SSF53807">
    <property type="entry name" value="Helical backbone' metal receptor"/>
    <property type="match status" value="1"/>
</dbReference>